<reference key="1">
    <citation type="journal article" date="2009" name="PLoS Genet.">
        <title>Organised genome dynamics in the Escherichia coli species results in highly diverse adaptive paths.</title>
        <authorList>
            <person name="Touchon M."/>
            <person name="Hoede C."/>
            <person name="Tenaillon O."/>
            <person name="Barbe V."/>
            <person name="Baeriswyl S."/>
            <person name="Bidet P."/>
            <person name="Bingen E."/>
            <person name="Bonacorsi S."/>
            <person name="Bouchier C."/>
            <person name="Bouvet O."/>
            <person name="Calteau A."/>
            <person name="Chiapello H."/>
            <person name="Clermont O."/>
            <person name="Cruveiller S."/>
            <person name="Danchin A."/>
            <person name="Diard M."/>
            <person name="Dossat C."/>
            <person name="Karoui M.E."/>
            <person name="Frapy E."/>
            <person name="Garry L."/>
            <person name="Ghigo J.M."/>
            <person name="Gilles A.M."/>
            <person name="Johnson J."/>
            <person name="Le Bouguenec C."/>
            <person name="Lescat M."/>
            <person name="Mangenot S."/>
            <person name="Martinez-Jehanne V."/>
            <person name="Matic I."/>
            <person name="Nassif X."/>
            <person name="Oztas S."/>
            <person name="Petit M.A."/>
            <person name="Pichon C."/>
            <person name="Rouy Z."/>
            <person name="Ruf C.S."/>
            <person name="Schneider D."/>
            <person name="Tourret J."/>
            <person name="Vacherie B."/>
            <person name="Vallenet D."/>
            <person name="Medigue C."/>
            <person name="Rocha E.P.C."/>
            <person name="Denamur E."/>
        </authorList>
    </citation>
    <scope>NUCLEOTIDE SEQUENCE [LARGE SCALE GENOMIC DNA]</scope>
    <source>
        <strain>ATCC 35469 / DSM 13698 / BCRC 15582 / CCUG 18766 / IAM 14443 / JCM 21226 / LMG 7866 / NBRC 102419 / NCTC 12128 / CDC 0568-73</strain>
    </source>
</reference>
<dbReference type="EC" id="2.4.2.17" evidence="1"/>
<dbReference type="EMBL" id="CU928158">
    <property type="protein sequence ID" value="CAQ89605.1"/>
    <property type="molecule type" value="Genomic_DNA"/>
</dbReference>
<dbReference type="RefSeq" id="WP_000131779.1">
    <property type="nucleotide sequence ID" value="NC_011740.1"/>
</dbReference>
<dbReference type="SMR" id="B7LUF0"/>
<dbReference type="GeneID" id="75056864"/>
<dbReference type="KEGG" id="efe:EFER_2102"/>
<dbReference type="HOGENOM" id="CLU_038115_1_0_6"/>
<dbReference type="OrthoDB" id="9801867at2"/>
<dbReference type="UniPathway" id="UPA00031">
    <property type="reaction ID" value="UER00006"/>
</dbReference>
<dbReference type="Proteomes" id="UP000000745">
    <property type="component" value="Chromosome"/>
</dbReference>
<dbReference type="GO" id="GO:0005737">
    <property type="term" value="C:cytoplasm"/>
    <property type="evidence" value="ECO:0007669"/>
    <property type="project" value="UniProtKB-SubCell"/>
</dbReference>
<dbReference type="GO" id="GO:0005524">
    <property type="term" value="F:ATP binding"/>
    <property type="evidence" value="ECO:0007669"/>
    <property type="project" value="UniProtKB-KW"/>
</dbReference>
<dbReference type="GO" id="GO:0003879">
    <property type="term" value="F:ATP phosphoribosyltransferase activity"/>
    <property type="evidence" value="ECO:0007669"/>
    <property type="project" value="UniProtKB-UniRule"/>
</dbReference>
<dbReference type="GO" id="GO:0000287">
    <property type="term" value="F:magnesium ion binding"/>
    <property type="evidence" value="ECO:0007669"/>
    <property type="project" value="UniProtKB-UniRule"/>
</dbReference>
<dbReference type="GO" id="GO:0000105">
    <property type="term" value="P:L-histidine biosynthetic process"/>
    <property type="evidence" value="ECO:0007669"/>
    <property type="project" value="UniProtKB-UniRule"/>
</dbReference>
<dbReference type="CDD" id="cd13592">
    <property type="entry name" value="PBP2_HisGL2"/>
    <property type="match status" value="1"/>
</dbReference>
<dbReference type="FunFam" id="3.30.70.120:FF:000002">
    <property type="entry name" value="ATP phosphoribosyltransferase"/>
    <property type="match status" value="1"/>
</dbReference>
<dbReference type="FunFam" id="3.40.190.10:FF:000008">
    <property type="entry name" value="ATP phosphoribosyltransferase"/>
    <property type="match status" value="1"/>
</dbReference>
<dbReference type="Gene3D" id="3.30.70.120">
    <property type="match status" value="1"/>
</dbReference>
<dbReference type="Gene3D" id="3.40.190.10">
    <property type="entry name" value="Periplasmic binding protein-like II"/>
    <property type="match status" value="2"/>
</dbReference>
<dbReference type="HAMAP" id="MF_00079">
    <property type="entry name" value="HisG_Long"/>
    <property type="match status" value="1"/>
</dbReference>
<dbReference type="InterPro" id="IPR020621">
    <property type="entry name" value="ATP-PRT_HisG_long"/>
</dbReference>
<dbReference type="InterPro" id="IPR013820">
    <property type="entry name" value="ATP_PRibTrfase_cat"/>
</dbReference>
<dbReference type="InterPro" id="IPR018198">
    <property type="entry name" value="ATP_PRibTrfase_CS"/>
</dbReference>
<dbReference type="InterPro" id="IPR001348">
    <property type="entry name" value="ATP_PRibTrfase_HisG"/>
</dbReference>
<dbReference type="InterPro" id="IPR013115">
    <property type="entry name" value="HisG_C"/>
</dbReference>
<dbReference type="InterPro" id="IPR011322">
    <property type="entry name" value="N-reg_PII-like_a/b"/>
</dbReference>
<dbReference type="InterPro" id="IPR015867">
    <property type="entry name" value="N-reg_PII/ATP_PRibTrfase_C"/>
</dbReference>
<dbReference type="NCBIfam" id="TIGR00070">
    <property type="entry name" value="hisG"/>
    <property type="match status" value="1"/>
</dbReference>
<dbReference type="NCBIfam" id="TIGR03455">
    <property type="entry name" value="HisG_C-term"/>
    <property type="match status" value="1"/>
</dbReference>
<dbReference type="PANTHER" id="PTHR21403:SF8">
    <property type="entry name" value="ATP PHOSPHORIBOSYLTRANSFERASE"/>
    <property type="match status" value="1"/>
</dbReference>
<dbReference type="PANTHER" id="PTHR21403">
    <property type="entry name" value="ATP PHOSPHORIBOSYLTRANSFERASE ATP-PRTASE"/>
    <property type="match status" value="1"/>
</dbReference>
<dbReference type="Pfam" id="PF01634">
    <property type="entry name" value="HisG"/>
    <property type="match status" value="1"/>
</dbReference>
<dbReference type="Pfam" id="PF08029">
    <property type="entry name" value="HisG_C"/>
    <property type="match status" value="1"/>
</dbReference>
<dbReference type="SUPFAM" id="SSF54913">
    <property type="entry name" value="GlnB-like"/>
    <property type="match status" value="1"/>
</dbReference>
<dbReference type="SUPFAM" id="SSF53850">
    <property type="entry name" value="Periplasmic binding protein-like II"/>
    <property type="match status" value="1"/>
</dbReference>
<dbReference type="PROSITE" id="PS01316">
    <property type="entry name" value="ATP_P_PHORIBOSYLTR"/>
    <property type="match status" value="1"/>
</dbReference>
<comment type="function">
    <text evidence="1">Catalyzes the condensation of ATP and 5-phosphoribose 1-diphosphate to form N'-(5'-phosphoribosyl)-ATP (PR-ATP). Has a crucial role in the pathway because the rate of histidine biosynthesis seems to be controlled primarily by regulation of HisG enzymatic activity.</text>
</comment>
<comment type="catalytic activity">
    <reaction evidence="1">
        <text>1-(5-phospho-beta-D-ribosyl)-ATP + diphosphate = 5-phospho-alpha-D-ribose 1-diphosphate + ATP</text>
        <dbReference type="Rhea" id="RHEA:18473"/>
        <dbReference type="ChEBI" id="CHEBI:30616"/>
        <dbReference type="ChEBI" id="CHEBI:33019"/>
        <dbReference type="ChEBI" id="CHEBI:58017"/>
        <dbReference type="ChEBI" id="CHEBI:73183"/>
        <dbReference type="EC" id="2.4.2.17"/>
    </reaction>
</comment>
<comment type="cofactor">
    <cofactor evidence="1">
        <name>Mg(2+)</name>
        <dbReference type="ChEBI" id="CHEBI:18420"/>
    </cofactor>
</comment>
<comment type="activity regulation">
    <text evidence="1">Feedback inhibited by histidine.</text>
</comment>
<comment type="pathway">
    <text evidence="1">Amino-acid biosynthesis; L-histidine biosynthesis; L-histidine from 5-phospho-alpha-D-ribose 1-diphosphate: step 1/9.</text>
</comment>
<comment type="subunit">
    <text evidence="1">Equilibrium between an active dimeric form, an inactive hexameric form and higher aggregates. Interconversion between the various forms is largely reversible and is influenced by the natural substrates and inhibitors of the enzyme.</text>
</comment>
<comment type="subcellular location">
    <subcellularLocation>
        <location evidence="1">Cytoplasm</location>
    </subcellularLocation>
</comment>
<comment type="similarity">
    <text evidence="1">Belongs to the ATP phosphoribosyltransferase family. Long subfamily.</text>
</comment>
<proteinExistence type="inferred from homology"/>
<gene>
    <name evidence="1" type="primary">hisG</name>
    <name type="ordered locus">EFER_2102</name>
</gene>
<feature type="chain" id="PRO_1000117093" description="ATP phosphoribosyltransferase">
    <location>
        <begin position="1"/>
        <end position="299"/>
    </location>
</feature>
<name>HIS1_ESCF3</name>
<accession>B7LUF0</accession>
<sequence length="299" mass="33353">MTDNTRLRIAMQKSGRLSDDSRELLARCGIKINLHTQRLIAMAENMPIDILRVRDDDIPGLVMDGVVDLGIIGENVLEEELLNRRAQGEDPRYFTLRRLDFGGCRLSLATPVDEAWDGPLSLNGKRIATSYPHLLKRYLDQKGISFKSCLLNGSVEVAPRAGLADAICDLVSTGATLEANGLREVEVIYRSKACLIQRDGEMEESKQQLIDKLLTRIQGVIQARESKYIMMHAPTDRLDEVIALLPGAERPTILPLAGDQQRVAMHMVSSETLFWETMEKLKALGASSILVLPIEKMME</sequence>
<protein>
    <recommendedName>
        <fullName evidence="1">ATP phosphoribosyltransferase</fullName>
        <shortName evidence="1">ATP-PRT</shortName>
        <shortName evidence="1">ATP-PRTase</shortName>
        <ecNumber evidence="1">2.4.2.17</ecNumber>
    </recommendedName>
</protein>
<evidence type="ECO:0000255" key="1">
    <source>
        <dbReference type="HAMAP-Rule" id="MF_00079"/>
    </source>
</evidence>
<keyword id="KW-0028">Amino-acid biosynthesis</keyword>
<keyword id="KW-0067">ATP-binding</keyword>
<keyword id="KW-0963">Cytoplasm</keyword>
<keyword id="KW-0328">Glycosyltransferase</keyword>
<keyword id="KW-0368">Histidine biosynthesis</keyword>
<keyword id="KW-0460">Magnesium</keyword>
<keyword id="KW-0479">Metal-binding</keyword>
<keyword id="KW-0547">Nucleotide-binding</keyword>
<keyword id="KW-0808">Transferase</keyword>
<organism>
    <name type="scientific">Escherichia fergusonii (strain ATCC 35469 / DSM 13698 / CCUG 18766 / IAM 14443 / JCM 21226 / LMG 7866 / NBRC 102419 / NCTC 12128 / CDC 0568-73)</name>
    <dbReference type="NCBI Taxonomy" id="585054"/>
    <lineage>
        <taxon>Bacteria</taxon>
        <taxon>Pseudomonadati</taxon>
        <taxon>Pseudomonadota</taxon>
        <taxon>Gammaproteobacteria</taxon>
        <taxon>Enterobacterales</taxon>
        <taxon>Enterobacteriaceae</taxon>
        <taxon>Escherichia</taxon>
    </lineage>
</organism>